<feature type="chain" id="PRO_1000120315" description="GMP synthase [glutamine-hydrolyzing]">
    <location>
        <begin position="1"/>
        <end position="513"/>
    </location>
</feature>
<feature type="domain" description="Glutamine amidotransferase type-1" evidence="1">
    <location>
        <begin position="7"/>
        <end position="197"/>
    </location>
</feature>
<feature type="domain" description="GMPS ATP-PPase" evidence="1">
    <location>
        <begin position="198"/>
        <end position="387"/>
    </location>
</feature>
<feature type="active site" description="Nucleophile" evidence="1">
    <location>
        <position position="84"/>
    </location>
</feature>
<feature type="active site" evidence="1">
    <location>
        <position position="171"/>
    </location>
</feature>
<feature type="active site" evidence="1">
    <location>
        <position position="173"/>
    </location>
</feature>
<feature type="binding site" evidence="1">
    <location>
        <begin position="225"/>
        <end position="231"/>
    </location>
    <ligand>
        <name>ATP</name>
        <dbReference type="ChEBI" id="CHEBI:30616"/>
    </ligand>
</feature>
<protein>
    <recommendedName>
        <fullName evidence="1">GMP synthase [glutamine-hydrolyzing]</fullName>
        <ecNumber evidence="1">6.3.5.2</ecNumber>
    </recommendedName>
    <alternativeName>
        <fullName evidence="1">GMP synthetase</fullName>
    </alternativeName>
    <alternativeName>
        <fullName evidence="1">Glutamine amidotransferase</fullName>
    </alternativeName>
</protein>
<evidence type="ECO:0000255" key="1">
    <source>
        <dbReference type="HAMAP-Rule" id="MF_00344"/>
    </source>
</evidence>
<gene>
    <name evidence="1" type="primary">guaA</name>
    <name type="ordered locus">Helmi_00570</name>
    <name type="ORF">HM1_0057</name>
</gene>
<comment type="function">
    <text evidence="1">Catalyzes the synthesis of GMP from XMP.</text>
</comment>
<comment type="catalytic activity">
    <reaction evidence="1">
        <text>XMP + L-glutamine + ATP + H2O = GMP + L-glutamate + AMP + diphosphate + 2 H(+)</text>
        <dbReference type="Rhea" id="RHEA:11680"/>
        <dbReference type="ChEBI" id="CHEBI:15377"/>
        <dbReference type="ChEBI" id="CHEBI:15378"/>
        <dbReference type="ChEBI" id="CHEBI:29985"/>
        <dbReference type="ChEBI" id="CHEBI:30616"/>
        <dbReference type="ChEBI" id="CHEBI:33019"/>
        <dbReference type="ChEBI" id="CHEBI:57464"/>
        <dbReference type="ChEBI" id="CHEBI:58115"/>
        <dbReference type="ChEBI" id="CHEBI:58359"/>
        <dbReference type="ChEBI" id="CHEBI:456215"/>
        <dbReference type="EC" id="6.3.5.2"/>
    </reaction>
</comment>
<comment type="pathway">
    <text evidence="1">Purine metabolism; GMP biosynthesis; GMP from XMP (L-Gln route): step 1/1.</text>
</comment>
<comment type="subunit">
    <text evidence="1">Homodimer.</text>
</comment>
<organism>
    <name type="scientific">Heliobacterium modesticaldum (strain ATCC 51547 / Ice1)</name>
    <dbReference type="NCBI Taxonomy" id="498761"/>
    <lineage>
        <taxon>Bacteria</taxon>
        <taxon>Bacillati</taxon>
        <taxon>Bacillota</taxon>
        <taxon>Clostridia</taxon>
        <taxon>Eubacteriales</taxon>
        <taxon>Heliobacteriaceae</taxon>
        <taxon>Heliomicrobium</taxon>
    </lineage>
</organism>
<dbReference type="EC" id="6.3.5.2" evidence="1"/>
<dbReference type="EMBL" id="CP000930">
    <property type="protein sequence ID" value="ABZ82682.1"/>
    <property type="molecule type" value="Genomic_DNA"/>
</dbReference>
<dbReference type="RefSeq" id="WP_012281231.1">
    <property type="nucleotide sequence ID" value="NC_010337.2"/>
</dbReference>
<dbReference type="SMR" id="B0TI09"/>
<dbReference type="STRING" id="498761.HM1_0057"/>
<dbReference type="KEGG" id="hmo:HM1_0057"/>
<dbReference type="eggNOG" id="COG0518">
    <property type="taxonomic scope" value="Bacteria"/>
</dbReference>
<dbReference type="eggNOG" id="COG0519">
    <property type="taxonomic scope" value="Bacteria"/>
</dbReference>
<dbReference type="HOGENOM" id="CLU_014340_0_5_9"/>
<dbReference type="OrthoDB" id="9802219at2"/>
<dbReference type="UniPathway" id="UPA00189">
    <property type="reaction ID" value="UER00296"/>
</dbReference>
<dbReference type="Proteomes" id="UP000008550">
    <property type="component" value="Chromosome"/>
</dbReference>
<dbReference type="GO" id="GO:0005829">
    <property type="term" value="C:cytosol"/>
    <property type="evidence" value="ECO:0007669"/>
    <property type="project" value="TreeGrafter"/>
</dbReference>
<dbReference type="GO" id="GO:0005524">
    <property type="term" value="F:ATP binding"/>
    <property type="evidence" value="ECO:0007669"/>
    <property type="project" value="UniProtKB-UniRule"/>
</dbReference>
<dbReference type="GO" id="GO:0003921">
    <property type="term" value="F:GMP synthase activity"/>
    <property type="evidence" value="ECO:0007669"/>
    <property type="project" value="InterPro"/>
</dbReference>
<dbReference type="CDD" id="cd01742">
    <property type="entry name" value="GATase1_GMP_Synthase"/>
    <property type="match status" value="1"/>
</dbReference>
<dbReference type="CDD" id="cd01997">
    <property type="entry name" value="GMP_synthase_C"/>
    <property type="match status" value="1"/>
</dbReference>
<dbReference type="FunFam" id="3.30.300.10:FF:000002">
    <property type="entry name" value="GMP synthase [glutamine-hydrolyzing]"/>
    <property type="match status" value="1"/>
</dbReference>
<dbReference type="FunFam" id="3.40.50.620:FF:000001">
    <property type="entry name" value="GMP synthase [glutamine-hydrolyzing]"/>
    <property type="match status" value="1"/>
</dbReference>
<dbReference type="FunFam" id="3.40.50.880:FF:000001">
    <property type="entry name" value="GMP synthase [glutamine-hydrolyzing]"/>
    <property type="match status" value="1"/>
</dbReference>
<dbReference type="Gene3D" id="3.30.300.10">
    <property type="match status" value="1"/>
</dbReference>
<dbReference type="Gene3D" id="3.40.50.880">
    <property type="match status" value="1"/>
</dbReference>
<dbReference type="Gene3D" id="3.40.50.620">
    <property type="entry name" value="HUPs"/>
    <property type="match status" value="1"/>
</dbReference>
<dbReference type="HAMAP" id="MF_00344">
    <property type="entry name" value="GMP_synthase"/>
    <property type="match status" value="1"/>
</dbReference>
<dbReference type="InterPro" id="IPR029062">
    <property type="entry name" value="Class_I_gatase-like"/>
</dbReference>
<dbReference type="InterPro" id="IPR017926">
    <property type="entry name" value="GATASE"/>
</dbReference>
<dbReference type="InterPro" id="IPR001674">
    <property type="entry name" value="GMP_synth_C"/>
</dbReference>
<dbReference type="InterPro" id="IPR004739">
    <property type="entry name" value="GMP_synth_GATase"/>
</dbReference>
<dbReference type="InterPro" id="IPR022955">
    <property type="entry name" value="GMP_synthase"/>
</dbReference>
<dbReference type="InterPro" id="IPR025777">
    <property type="entry name" value="GMPS_ATP_PPase_dom"/>
</dbReference>
<dbReference type="InterPro" id="IPR022310">
    <property type="entry name" value="NAD/GMP_synthase"/>
</dbReference>
<dbReference type="InterPro" id="IPR014729">
    <property type="entry name" value="Rossmann-like_a/b/a_fold"/>
</dbReference>
<dbReference type="NCBIfam" id="TIGR00884">
    <property type="entry name" value="guaA_Cterm"/>
    <property type="match status" value="1"/>
</dbReference>
<dbReference type="NCBIfam" id="TIGR00888">
    <property type="entry name" value="guaA_Nterm"/>
    <property type="match status" value="1"/>
</dbReference>
<dbReference type="NCBIfam" id="NF000848">
    <property type="entry name" value="PRK00074.1"/>
    <property type="match status" value="1"/>
</dbReference>
<dbReference type="PANTHER" id="PTHR11922:SF2">
    <property type="entry name" value="GMP SYNTHASE [GLUTAMINE-HYDROLYZING]"/>
    <property type="match status" value="1"/>
</dbReference>
<dbReference type="PANTHER" id="PTHR11922">
    <property type="entry name" value="GMP SYNTHASE-RELATED"/>
    <property type="match status" value="1"/>
</dbReference>
<dbReference type="Pfam" id="PF00117">
    <property type="entry name" value="GATase"/>
    <property type="match status" value="1"/>
</dbReference>
<dbReference type="Pfam" id="PF00958">
    <property type="entry name" value="GMP_synt_C"/>
    <property type="match status" value="1"/>
</dbReference>
<dbReference type="Pfam" id="PF02540">
    <property type="entry name" value="NAD_synthase"/>
    <property type="match status" value="1"/>
</dbReference>
<dbReference type="PRINTS" id="PR00099">
    <property type="entry name" value="CPSGATASE"/>
</dbReference>
<dbReference type="PRINTS" id="PR00096">
    <property type="entry name" value="GATASE"/>
</dbReference>
<dbReference type="SUPFAM" id="SSF52402">
    <property type="entry name" value="Adenine nucleotide alpha hydrolases-like"/>
    <property type="match status" value="1"/>
</dbReference>
<dbReference type="SUPFAM" id="SSF52317">
    <property type="entry name" value="Class I glutamine amidotransferase-like"/>
    <property type="match status" value="1"/>
</dbReference>
<dbReference type="SUPFAM" id="SSF54810">
    <property type="entry name" value="GMP synthetase C-terminal dimerisation domain"/>
    <property type="match status" value="1"/>
</dbReference>
<dbReference type="PROSITE" id="PS51273">
    <property type="entry name" value="GATASE_TYPE_1"/>
    <property type="match status" value="1"/>
</dbReference>
<dbReference type="PROSITE" id="PS51553">
    <property type="entry name" value="GMPS_ATP_PPASE"/>
    <property type="match status" value="1"/>
</dbReference>
<sequence length="513" mass="56910">MAKPHETILVLDFGGQYNQLIARRVRELHVYCEMHPYTISVDAIREMNPKGIIFTGGPASVYEEKAPAVDPAIYDLGIPILGICYGMQLMVNQLGGKVGRAESREYGKASLTITASEGPFAGMEGDVQCWMSHGDKVEVLPHGFVGSGKTDHAPFAAMADPVRRFYGVQFHPEVRHTPQGMDMMRNFLFGVCGCTGEWTMENFIEEQVAAIRARVGSGKVLCALSGGVDSSVAALLVHRAVGEQLTCVYVDHGFMRLNESERIIKTFRDELGMNLIAVEASERFMAKVAGVSDPETKRKSIGNEFIRVFEEEAAKLGQVDFLVQGTLYPDVVESGTSTAETIKTHHNVGGLPEDMKFELIEPLRTLFKDEVREVGQRLGLPEDIVWRQPFPGPGLAIRVLGEITKESLDILRHADDIVFQEIKKAGLYRQIWQSFVVLPTTVRSVGVMGDGRTYEYPAILRAVTSDDAMTADWARLPYELLEKISNRIVNEVKGVNRVVYDITSKPPGTIEWE</sequence>
<name>GUAA_HELMI</name>
<proteinExistence type="inferred from homology"/>
<keyword id="KW-0067">ATP-binding</keyword>
<keyword id="KW-0315">Glutamine amidotransferase</keyword>
<keyword id="KW-0332">GMP biosynthesis</keyword>
<keyword id="KW-0436">Ligase</keyword>
<keyword id="KW-0547">Nucleotide-binding</keyword>
<keyword id="KW-0658">Purine biosynthesis</keyword>
<keyword id="KW-1185">Reference proteome</keyword>
<accession>B0TI09</accession>
<reference key="1">
    <citation type="journal article" date="2008" name="J. Bacteriol.">
        <title>The genome of Heliobacterium modesticaldum, a phototrophic representative of the Firmicutes containing the simplest photosynthetic apparatus.</title>
        <authorList>
            <person name="Sattley W.M."/>
            <person name="Madigan M.T."/>
            <person name="Swingley W.D."/>
            <person name="Cheung P.C."/>
            <person name="Clocksin K.M."/>
            <person name="Conrad A.L."/>
            <person name="Dejesa L.C."/>
            <person name="Honchak B.M."/>
            <person name="Jung D.O."/>
            <person name="Karbach L.E."/>
            <person name="Kurdoglu A."/>
            <person name="Lahiri S."/>
            <person name="Mastrian S.D."/>
            <person name="Page L.E."/>
            <person name="Taylor H.L."/>
            <person name="Wang Z.T."/>
            <person name="Raymond J."/>
            <person name="Chen M."/>
            <person name="Blankenship R.E."/>
            <person name="Touchman J.W."/>
        </authorList>
    </citation>
    <scope>NUCLEOTIDE SEQUENCE [LARGE SCALE GENOMIC DNA]</scope>
    <source>
        <strain>ATCC 51547 / Ice1</strain>
    </source>
</reference>